<comment type="function">
    <text evidence="1">Involved in the third step of the chorismate pathway, which leads to the biosynthesis of aromatic amino acids. Catalyzes the cis-dehydration of 3-dehydroquinate (DHQ) and introduces the first double bond of the aromatic ring to yield 3-dehydroshikimate.</text>
</comment>
<comment type="catalytic activity">
    <reaction evidence="1">
        <text>3-dehydroquinate = 3-dehydroshikimate + H2O</text>
        <dbReference type="Rhea" id="RHEA:21096"/>
        <dbReference type="ChEBI" id="CHEBI:15377"/>
        <dbReference type="ChEBI" id="CHEBI:16630"/>
        <dbReference type="ChEBI" id="CHEBI:32364"/>
        <dbReference type="EC" id="4.2.1.10"/>
    </reaction>
</comment>
<comment type="pathway">
    <text evidence="1">Metabolic intermediate biosynthesis; chorismate biosynthesis; chorismate from D-erythrose 4-phosphate and phosphoenolpyruvate: step 3/7.</text>
</comment>
<comment type="subunit">
    <text evidence="1">Homodimer.</text>
</comment>
<comment type="similarity">
    <text evidence="1">Belongs to the type-I 3-dehydroquinase family.</text>
</comment>
<dbReference type="EC" id="4.2.1.10" evidence="1"/>
<dbReference type="EMBL" id="CP000077">
    <property type="protein sequence ID" value="AAY79608.1"/>
    <property type="molecule type" value="Genomic_DNA"/>
</dbReference>
<dbReference type="RefSeq" id="WP_011277109.1">
    <property type="nucleotide sequence ID" value="NC_007181.1"/>
</dbReference>
<dbReference type="SMR" id="Q4JC71"/>
<dbReference type="STRING" id="330779.Saci_0189"/>
<dbReference type="GeneID" id="14550717"/>
<dbReference type="KEGG" id="sai:Saci_0189"/>
<dbReference type="PATRIC" id="fig|330779.12.peg.181"/>
<dbReference type="eggNOG" id="arCOG02097">
    <property type="taxonomic scope" value="Archaea"/>
</dbReference>
<dbReference type="HOGENOM" id="CLU_064444_2_0_2"/>
<dbReference type="UniPathway" id="UPA00053">
    <property type="reaction ID" value="UER00086"/>
</dbReference>
<dbReference type="Proteomes" id="UP000001018">
    <property type="component" value="Chromosome"/>
</dbReference>
<dbReference type="GO" id="GO:0003855">
    <property type="term" value="F:3-dehydroquinate dehydratase activity"/>
    <property type="evidence" value="ECO:0007669"/>
    <property type="project" value="UniProtKB-UniRule"/>
</dbReference>
<dbReference type="GO" id="GO:0046279">
    <property type="term" value="P:3,4-dihydroxybenzoate biosynthetic process"/>
    <property type="evidence" value="ECO:0007669"/>
    <property type="project" value="TreeGrafter"/>
</dbReference>
<dbReference type="GO" id="GO:0008652">
    <property type="term" value="P:amino acid biosynthetic process"/>
    <property type="evidence" value="ECO:0007669"/>
    <property type="project" value="UniProtKB-KW"/>
</dbReference>
<dbReference type="GO" id="GO:0009073">
    <property type="term" value="P:aromatic amino acid family biosynthetic process"/>
    <property type="evidence" value="ECO:0007669"/>
    <property type="project" value="UniProtKB-KW"/>
</dbReference>
<dbReference type="GO" id="GO:0009423">
    <property type="term" value="P:chorismate biosynthetic process"/>
    <property type="evidence" value="ECO:0007669"/>
    <property type="project" value="UniProtKB-UniRule"/>
</dbReference>
<dbReference type="CDD" id="cd00502">
    <property type="entry name" value="DHQase_I"/>
    <property type="match status" value="1"/>
</dbReference>
<dbReference type="Gene3D" id="3.20.20.70">
    <property type="entry name" value="Aldolase class I"/>
    <property type="match status" value="1"/>
</dbReference>
<dbReference type="HAMAP" id="MF_00214">
    <property type="entry name" value="AroD"/>
    <property type="match status" value="1"/>
</dbReference>
<dbReference type="InterPro" id="IPR013785">
    <property type="entry name" value="Aldolase_TIM"/>
</dbReference>
<dbReference type="InterPro" id="IPR001381">
    <property type="entry name" value="DHquinase_I"/>
</dbReference>
<dbReference type="InterPro" id="IPR050146">
    <property type="entry name" value="Type-I_3-dehydroquinase"/>
</dbReference>
<dbReference type="NCBIfam" id="NF010091">
    <property type="entry name" value="PRK13576.1"/>
    <property type="match status" value="1"/>
</dbReference>
<dbReference type="PANTHER" id="PTHR43699">
    <property type="entry name" value="3-DEHYDROQUINATE DEHYDRATASE"/>
    <property type="match status" value="1"/>
</dbReference>
<dbReference type="PANTHER" id="PTHR43699:SF1">
    <property type="entry name" value="3-DEHYDROQUINATE DEHYDRATASE"/>
    <property type="match status" value="1"/>
</dbReference>
<dbReference type="Pfam" id="PF01487">
    <property type="entry name" value="DHquinase_I"/>
    <property type="match status" value="1"/>
</dbReference>
<dbReference type="SUPFAM" id="SSF51569">
    <property type="entry name" value="Aldolase"/>
    <property type="match status" value="1"/>
</dbReference>
<keyword id="KW-0028">Amino-acid biosynthesis</keyword>
<keyword id="KW-0057">Aromatic amino acid biosynthesis</keyword>
<keyword id="KW-0456">Lyase</keyword>
<keyword id="KW-1185">Reference proteome</keyword>
<keyword id="KW-0704">Schiff base</keyword>
<reference key="1">
    <citation type="journal article" date="2005" name="J. Bacteriol.">
        <title>The genome of Sulfolobus acidocaldarius, a model organism of the Crenarchaeota.</title>
        <authorList>
            <person name="Chen L."/>
            <person name="Bruegger K."/>
            <person name="Skovgaard M."/>
            <person name="Redder P."/>
            <person name="She Q."/>
            <person name="Torarinsson E."/>
            <person name="Greve B."/>
            <person name="Awayez M."/>
            <person name="Zibat A."/>
            <person name="Klenk H.-P."/>
            <person name="Garrett R.A."/>
        </authorList>
    </citation>
    <scope>NUCLEOTIDE SEQUENCE [LARGE SCALE GENOMIC DNA]</scope>
    <source>
        <strain>ATCC 33909 / DSM 639 / JCM 8929 / NBRC 15157 / NCIMB 11770</strain>
    </source>
</reference>
<organism>
    <name type="scientific">Sulfolobus acidocaldarius (strain ATCC 33909 / DSM 639 / JCM 8929 / NBRC 15157 / NCIMB 11770)</name>
    <dbReference type="NCBI Taxonomy" id="330779"/>
    <lineage>
        <taxon>Archaea</taxon>
        <taxon>Thermoproteota</taxon>
        <taxon>Thermoprotei</taxon>
        <taxon>Sulfolobales</taxon>
        <taxon>Sulfolobaceae</taxon>
        <taxon>Sulfolobus</taxon>
    </lineage>
</organism>
<name>AROD_SULAC</name>
<evidence type="ECO:0000255" key="1">
    <source>
        <dbReference type="HAMAP-Rule" id="MF_00214"/>
    </source>
</evidence>
<accession>Q4JC71</accession>
<gene>
    <name evidence="1" type="primary">aroD</name>
    <name type="ordered locus">Saci_0189</name>
</gene>
<sequence length="219" mass="25568">MIYISPKLVVALPVKELKDLNRIELLINDVDLVELRLDYLSKFDVDILDLFSKYKEKLIITLRDKDEGGVNYIDPAFKANFVRRMEREKFMYDIEARFALRYQVNVKDKIVSIHYFDNLPEFTEVKEIFDKFDEAYLRKIAVIAKRGYRELLMRVLDNYDNAVVMPMGVNGVERIAFSLLGSKLIYAHAGEETAKGQLHYKDVRRILNQLSTIMSSPST</sequence>
<proteinExistence type="inferred from homology"/>
<protein>
    <recommendedName>
        <fullName evidence="1">3-dehydroquinate dehydratase</fullName>
        <shortName evidence="1">3-dehydroquinase</shortName>
        <ecNumber evidence="1">4.2.1.10</ecNumber>
    </recommendedName>
    <alternativeName>
        <fullName evidence="1">Type I DHQase</fullName>
    </alternativeName>
    <alternativeName>
        <fullName evidence="1">Type I dehydroquinase</fullName>
        <shortName evidence="1">DHQ1</shortName>
    </alternativeName>
</protein>
<feature type="chain" id="PRO_0000138837" description="3-dehydroquinate dehydratase">
    <location>
        <begin position="1"/>
        <end position="219"/>
    </location>
</feature>
<feature type="active site" description="Proton donor/acceptor" evidence="1">
    <location>
        <position position="114"/>
    </location>
</feature>
<feature type="active site" description="Schiff-base intermediate with substrate" evidence="1">
    <location>
        <position position="139"/>
    </location>
</feature>
<feature type="binding site" evidence="1">
    <location>
        <begin position="34"/>
        <end position="36"/>
    </location>
    <ligand>
        <name>3-dehydroquinate</name>
        <dbReference type="ChEBI" id="CHEBI:32364"/>
    </ligand>
</feature>
<feature type="binding site" evidence="1">
    <location>
        <position position="63"/>
    </location>
    <ligand>
        <name>3-dehydroquinate</name>
        <dbReference type="ChEBI" id="CHEBI:32364"/>
    </ligand>
</feature>
<feature type="binding site" evidence="1">
    <location>
        <position position="174"/>
    </location>
    <ligand>
        <name>3-dehydroquinate</name>
        <dbReference type="ChEBI" id="CHEBI:32364"/>
    </ligand>
</feature>
<feature type="binding site" evidence="1">
    <location>
        <position position="193"/>
    </location>
    <ligand>
        <name>3-dehydroquinate</name>
        <dbReference type="ChEBI" id="CHEBI:32364"/>
    </ligand>
</feature>
<feature type="binding site" evidence="1">
    <location>
        <position position="197"/>
    </location>
    <ligand>
        <name>3-dehydroquinate</name>
        <dbReference type="ChEBI" id="CHEBI:32364"/>
    </ligand>
</feature>